<keyword id="KW-0963">Cytoplasm</keyword>
<keyword id="KW-0539">Nucleus</keyword>
<keyword id="KW-0597">Phosphoprotein</keyword>
<keyword id="KW-1185">Reference proteome</keyword>
<keyword id="KW-0678">Repressor</keyword>
<keyword id="KW-0804">Transcription</keyword>
<keyword id="KW-0805">Transcription regulation</keyword>
<gene>
    <name type="primary">NRM1</name>
    <name type="ordered locus">YNR009W</name>
    <name type="ORF">N2044</name>
</gene>
<protein>
    <recommendedName>
        <fullName>Transcription factor NRM1</fullName>
    </recommendedName>
    <alternativeName>
        <fullName>Negative regulator of MBF targets 1</fullName>
    </alternativeName>
</protein>
<comment type="function">
    <text evidence="4">Negative regulatory component of the MBF complex involved in cell-cycle-dependent transcription.</text>
</comment>
<comment type="subunit">
    <text evidence="4">The MBF complex is composed of at least SWI6, MBP1 and NRM1.</text>
</comment>
<comment type="subcellular location">
    <subcellularLocation>
        <location evidence="2">Cytoplasm</location>
    </subcellularLocation>
    <subcellularLocation>
        <location evidence="2">Nucleus</location>
    </subcellularLocation>
</comment>
<comment type="induction">
    <text evidence="4">During G1 phase of the cell cycle.</text>
</comment>
<comment type="miscellaneous">
    <text evidence="3">Present with 2880 molecules/cell in log phase SD medium.</text>
</comment>
<comment type="similarity">
    <text evidence="5">Belongs to the WHI5/NRM1 family.</text>
</comment>
<organism>
    <name type="scientific">Saccharomyces cerevisiae (strain ATCC 204508 / S288c)</name>
    <name type="common">Baker's yeast</name>
    <dbReference type="NCBI Taxonomy" id="559292"/>
    <lineage>
        <taxon>Eukaryota</taxon>
        <taxon>Fungi</taxon>
        <taxon>Dikarya</taxon>
        <taxon>Ascomycota</taxon>
        <taxon>Saccharomycotina</taxon>
        <taxon>Saccharomycetes</taxon>
        <taxon>Saccharomycetales</taxon>
        <taxon>Saccharomycetaceae</taxon>
        <taxon>Saccharomyces</taxon>
    </lineage>
</organism>
<evidence type="ECO:0000256" key="1">
    <source>
        <dbReference type="SAM" id="MobiDB-lite"/>
    </source>
</evidence>
<evidence type="ECO:0000269" key="2">
    <source>
    </source>
</evidence>
<evidence type="ECO:0000269" key="3">
    <source>
    </source>
</evidence>
<evidence type="ECO:0000269" key="4">
    <source>
    </source>
</evidence>
<evidence type="ECO:0000305" key="5"/>
<evidence type="ECO:0007744" key="6">
    <source>
    </source>
</evidence>
<accession>P53718</accession>
<accession>D6W1I4</accession>
<dbReference type="EMBL" id="X77395">
    <property type="protein sequence ID" value="CAA54577.1"/>
    <property type="molecule type" value="Genomic_DNA"/>
</dbReference>
<dbReference type="EMBL" id="Z71624">
    <property type="protein sequence ID" value="CAA96286.1"/>
    <property type="molecule type" value="Genomic_DNA"/>
</dbReference>
<dbReference type="EMBL" id="AY692622">
    <property type="protein sequence ID" value="AAT92641.1"/>
    <property type="molecule type" value="Genomic_DNA"/>
</dbReference>
<dbReference type="EMBL" id="BK006947">
    <property type="protein sequence ID" value="DAA10550.1"/>
    <property type="molecule type" value="Genomic_DNA"/>
</dbReference>
<dbReference type="PIR" id="S48346">
    <property type="entry name" value="S48346"/>
</dbReference>
<dbReference type="RefSeq" id="NP_014406.1">
    <property type="nucleotide sequence ID" value="NM_001183186.1"/>
</dbReference>
<dbReference type="SMR" id="P53718"/>
<dbReference type="BioGRID" id="35834">
    <property type="interactions" value="63"/>
</dbReference>
<dbReference type="DIP" id="DIP-4530N"/>
<dbReference type="FunCoup" id="P53718">
    <property type="interactions" value="117"/>
</dbReference>
<dbReference type="IntAct" id="P53718">
    <property type="interactions" value="2"/>
</dbReference>
<dbReference type="STRING" id="4932.YNR009W"/>
<dbReference type="iPTMnet" id="P53718"/>
<dbReference type="PaxDb" id="4932-YNR009W"/>
<dbReference type="PeptideAtlas" id="P53718"/>
<dbReference type="EnsemblFungi" id="YNR009W_mRNA">
    <property type="protein sequence ID" value="YNR009W"/>
    <property type="gene ID" value="YNR009W"/>
</dbReference>
<dbReference type="GeneID" id="855743"/>
<dbReference type="KEGG" id="sce:YNR009W"/>
<dbReference type="AGR" id="SGD:S000005292"/>
<dbReference type="SGD" id="S000005292">
    <property type="gene designation" value="NRM1"/>
</dbReference>
<dbReference type="VEuPathDB" id="FungiDB:YNR009W"/>
<dbReference type="eggNOG" id="ENOG502S72A">
    <property type="taxonomic scope" value="Eukaryota"/>
</dbReference>
<dbReference type="HOGENOM" id="CLU_098759_0_0_1"/>
<dbReference type="InParanoid" id="P53718"/>
<dbReference type="OMA" id="QFAYYKY"/>
<dbReference type="OrthoDB" id="4061338at2759"/>
<dbReference type="BioCyc" id="YEAST:G3O-33326-MONOMER"/>
<dbReference type="BioGRID-ORCS" id="855743">
    <property type="hits" value="7 hits in 10 CRISPR screens"/>
</dbReference>
<dbReference type="PRO" id="PR:P53718"/>
<dbReference type="Proteomes" id="UP000002311">
    <property type="component" value="Chromosome XIV"/>
</dbReference>
<dbReference type="RNAct" id="P53718">
    <property type="molecule type" value="protein"/>
</dbReference>
<dbReference type="GO" id="GO:0005737">
    <property type="term" value="C:cytoplasm"/>
    <property type="evidence" value="ECO:0007005"/>
    <property type="project" value="SGD"/>
</dbReference>
<dbReference type="GO" id="GO:0030907">
    <property type="term" value="C:MBF transcription complex"/>
    <property type="evidence" value="ECO:0000314"/>
    <property type="project" value="SGD"/>
</dbReference>
<dbReference type="GO" id="GO:0005634">
    <property type="term" value="C:nucleus"/>
    <property type="evidence" value="ECO:0007005"/>
    <property type="project" value="SGD"/>
</dbReference>
<dbReference type="GO" id="GO:0140297">
    <property type="term" value="F:DNA-binding transcription factor binding"/>
    <property type="evidence" value="ECO:0000353"/>
    <property type="project" value="SGD"/>
</dbReference>
<dbReference type="GO" id="GO:0000082">
    <property type="term" value="P:G1/S transition of mitotic cell cycle"/>
    <property type="evidence" value="ECO:0000315"/>
    <property type="project" value="SGD"/>
</dbReference>
<dbReference type="GO" id="GO:0000122">
    <property type="term" value="P:negative regulation of transcription by RNA polymerase II"/>
    <property type="evidence" value="ECO:0000315"/>
    <property type="project" value="SGD"/>
</dbReference>
<dbReference type="InterPro" id="IPR013734">
    <property type="entry name" value="TF_Nrm1/Whi5"/>
</dbReference>
<dbReference type="Pfam" id="PF08528">
    <property type="entry name" value="Whi5"/>
    <property type="match status" value="1"/>
</dbReference>
<name>NRM1_YEAST</name>
<proteinExistence type="evidence at protein level"/>
<sequence length="249" mass="27564">MSIMKQRLPLGEFSSSKINKLAIANIADASEPRNHGENNVGTVCLPSIKSLMVSPEVYENTKSLPVPLMRSSGGGMACASKSSCQDGISTKTTSRDYSELSKKLQIRLQFAYYKYKTKQTDKNFTDLKSKHSITRPSKVATHSKSEPLTRRRKLVLSQGHYKTPARSKIKTPSSICSHDNTSSFTSFRGVSESSSTTADMNVADTTTPIRNNINTKHSNSHNRTLYQRQETPTSIKAAKSLIHLFTSNQ</sequence>
<reference key="1">
    <citation type="journal article" date="1994" name="Yeast">
        <title>Twelve open reading frames revealed in the 23.6 kb segment flanking the centromere on the Saccharomyces cerevisiae chromosome XIV right arm.</title>
        <authorList>
            <person name="Verhasselt P."/>
            <person name="Aert R."/>
            <person name="Voet M."/>
            <person name="Volckaert G."/>
        </authorList>
    </citation>
    <scope>NUCLEOTIDE SEQUENCE [GENOMIC DNA]</scope>
    <source>
        <strain>ATCC 96604 / S288c / FY1679</strain>
    </source>
</reference>
<reference key="2">
    <citation type="journal article" date="1997" name="Nature">
        <title>The nucleotide sequence of Saccharomyces cerevisiae chromosome XIV and its evolutionary implications.</title>
        <authorList>
            <person name="Philippsen P."/>
            <person name="Kleine K."/>
            <person name="Poehlmann R."/>
            <person name="Duesterhoeft A."/>
            <person name="Hamberg K."/>
            <person name="Hegemann J.H."/>
            <person name="Obermaier B."/>
            <person name="Urrestarazu L.A."/>
            <person name="Aert R."/>
            <person name="Albermann K."/>
            <person name="Altmann R."/>
            <person name="Andre B."/>
            <person name="Baladron V."/>
            <person name="Ballesta J.P.G."/>
            <person name="Becam A.-M."/>
            <person name="Beinhauer J.D."/>
            <person name="Boskovic J."/>
            <person name="Buitrago M.J."/>
            <person name="Bussereau F."/>
            <person name="Coster F."/>
            <person name="Crouzet M."/>
            <person name="D'Angelo M."/>
            <person name="Dal Pero F."/>
            <person name="De Antoni A."/>
            <person name="del Rey F."/>
            <person name="Doignon F."/>
            <person name="Domdey H."/>
            <person name="Dubois E."/>
            <person name="Fiedler T.A."/>
            <person name="Fleig U."/>
            <person name="Floeth M."/>
            <person name="Fritz C."/>
            <person name="Gaillardin C."/>
            <person name="Garcia-Cantalejo J.M."/>
            <person name="Glansdorff N."/>
            <person name="Goffeau A."/>
            <person name="Gueldener U."/>
            <person name="Herbert C.J."/>
            <person name="Heumann K."/>
            <person name="Heuss-Neitzel D."/>
            <person name="Hilbert H."/>
            <person name="Hinni K."/>
            <person name="Iraqui Houssaini I."/>
            <person name="Jacquet M."/>
            <person name="Jimenez A."/>
            <person name="Jonniaux J.-L."/>
            <person name="Karpfinger-Hartl L."/>
            <person name="Lanfranchi G."/>
            <person name="Lepingle A."/>
            <person name="Levesque H."/>
            <person name="Lyck R."/>
            <person name="Maftahi M."/>
            <person name="Mallet L."/>
            <person name="Maurer C.T.C."/>
            <person name="Messenguy F."/>
            <person name="Mewes H.-W."/>
            <person name="Moestl D."/>
            <person name="Nasr F."/>
            <person name="Nicaud J.-M."/>
            <person name="Niedenthal R.K."/>
            <person name="Pandolfo D."/>
            <person name="Pierard A."/>
            <person name="Piravandi E."/>
            <person name="Planta R.J."/>
            <person name="Pohl T.M."/>
            <person name="Purnelle B."/>
            <person name="Rebischung C."/>
            <person name="Remacha M.A."/>
            <person name="Revuelta J.L."/>
            <person name="Rinke M."/>
            <person name="Saiz J.E."/>
            <person name="Sartorello F."/>
            <person name="Scherens B."/>
            <person name="Sen-Gupta M."/>
            <person name="Soler-Mira A."/>
            <person name="Urbanus J.H.M."/>
            <person name="Valle G."/>
            <person name="Van Dyck L."/>
            <person name="Verhasselt P."/>
            <person name="Vierendeels F."/>
            <person name="Vissers S."/>
            <person name="Voet M."/>
            <person name="Volckaert G."/>
            <person name="Wach A."/>
            <person name="Wambutt R."/>
            <person name="Wedler H."/>
            <person name="Zollner A."/>
            <person name="Hani J."/>
        </authorList>
    </citation>
    <scope>NUCLEOTIDE SEQUENCE [LARGE SCALE GENOMIC DNA]</scope>
    <source>
        <strain>ATCC 204508 / S288c</strain>
    </source>
</reference>
<reference key="3">
    <citation type="journal article" date="2014" name="G3 (Bethesda)">
        <title>The reference genome sequence of Saccharomyces cerevisiae: Then and now.</title>
        <authorList>
            <person name="Engel S.R."/>
            <person name="Dietrich F.S."/>
            <person name="Fisk D.G."/>
            <person name="Binkley G."/>
            <person name="Balakrishnan R."/>
            <person name="Costanzo M.C."/>
            <person name="Dwight S.S."/>
            <person name="Hitz B.C."/>
            <person name="Karra K."/>
            <person name="Nash R.S."/>
            <person name="Weng S."/>
            <person name="Wong E.D."/>
            <person name="Lloyd P."/>
            <person name="Skrzypek M.S."/>
            <person name="Miyasato S.R."/>
            <person name="Simison M."/>
            <person name="Cherry J.M."/>
        </authorList>
    </citation>
    <scope>GENOME REANNOTATION</scope>
    <source>
        <strain>ATCC 204508 / S288c</strain>
    </source>
</reference>
<reference key="4">
    <citation type="journal article" date="2007" name="Genome Res.">
        <title>Approaching a complete repository of sequence-verified protein-encoding clones for Saccharomyces cerevisiae.</title>
        <authorList>
            <person name="Hu Y."/>
            <person name="Rolfs A."/>
            <person name="Bhullar B."/>
            <person name="Murthy T.V.S."/>
            <person name="Zhu C."/>
            <person name="Berger M.F."/>
            <person name="Camargo A.A."/>
            <person name="Kelley F."/>
            <person name="McCarron S."/>
            <person name="Jepson D."/>
            <person name="Richardson A."/>
            <person name="Raphael J."/>
            <person name="Moreira D."/>
            <person name="Taycher E."/>
            <person name="Zuo D."/>
            <person name="Mohr S."/>
            <person name="Kane M.F."/>
            <person name="Williamson J."/>
            <person name="Simpson A.J.G."/>
            <person name="Bulyk M.L."/>
            <person name="Harlow E."/>
            <person name="Marsischky G."/>
            <person name="Kolodner R.D."/>
            <person name="LaBaer J."/>
        </authorList>
    </citation>
    <scope>NUCLEOTIDE SEQUENCE [GENOMIC DNA]</scope>
    <source>
        <strain>ATCC 204508 / S288c</strain>
    </source>
</reference>
<reference key="5">
    <citation type="journal article" date="2003" name="Nature">
        <title>Global analysis of protein localization in budding yeast.</title>
        <authorList>
            <person name="Huh W.-K."/>
            <person name="Falvo J.V."/>
            <person name="Gerke L.C."/>
            <person name="Carroll A.S."/>
            <person name="Howson R.W."/>
            <person name="Weissman J.S."/>
            <person name="O'Shea E.K."/>
        </authorList>
    </citation>
    <scope>SUBCELLULAR LOCATION [LARGE SCALE ANALYSIS]</scope>
</reference>
<reference key="6">
    <citation type="journal article" date="2003" name="Nature">
        <title>Global analysis of protein expression in yeast.</title>
        <authorList>
            <person name="Ghaemmaghami S."/>
            <person name="Huh W.-K."/>
            <person name="Bower K."/>
            <person name="Howson R.W."/>
            <person name="Belle A."/>
            <person name="Dephoure N."/>
            <person name="O'Shea E.K."/>
            <person name="Weissman J.S."/>
        </authorList>
    </citation>
    <scope>LEVEL OF PROTEIN EXPRESSION [LARGE SCALE ANALYSIS]</scope>
</reference>
<reference key="7">
    <citation type="journal article" date="2006" name="Mol. Cell">
        <title>Constraining G1-specific transcription to late G1 phase: the MBF-associated corepressor Nrm1 acts via negative feedback.</title>
        <authorList>
            <person name="de Bruin R.A.M."/>
            <person name="Kalashnikova T.I."/>
            <person name="Chahwan C."/>
            <person name="McDonald W.H."/>
            <person name="Wohlschlegel J."/>
            <person name="Yates J. III"/>
            <person name="Russell P."/>
            <person name="Wittenberg C."/>
        </authorList>
    </citation>
    <scope>IDENTIFICATION IN THE MBF COMPLEX</scope>
    <scope>FUNCTION</scope>
    <scope>INDUCTION</scope>
</reference>
<reference key="8">
    <citation type="journal article" date="2007" name="Proc. Natl. Acad. Sci. U.S.A.">
        <title>Analysis of phosphorylation sites on proteins from Saccharomyces cerevisiae by electron transfer dissociation (ETD) mass spectrometry.</title>
        <authorList>
            <person name="Chi A."/>
            <person name="Huttenhower C."/>
            <person name="Geer L.Y."/>
            <person name="Coon J.J."/>
            <person name="Syka J.E.P."/>
            <person name="Bai D.L."/>
            <person name="Shabanowitz J."/>
            <person name="Burke D.J."/>
            <person name="Troyanskaya O.G."/>
            <person name="Hunt D.F."/>
        </authorList>
    </citation>
    <scope>IDENTIFICATION BY MASS SPECTROMETRY [LARGE SCALE ANALYSIS]</scope>
</reference>
<reference key="9">
    <citation type="journal article" date="2008" name="Mol. Cell. Proteomics">
        <title>A multidimensional chromatography technology for in-depth phosphoproteome analysis.</title>
        <authorList>
            <person name="Albuquerque C.P."/>
            <person name="Smolka M.B."/>
            <person name="Payne S.H."/>
            <person name="Bafna V."/>
            <person name="Eng J."/>
            <person name="Zhou H."/>
        </authorList>
    </citation>
    <scope>PHOSPHORYLATION [LARGE SCALE ANALYSIS] AT SER-145</scope>
    <scope>IDENTIFICATION BY MASS SPECTROMETRY [LARGE SCALE ANALYSIS]</scope>
</reference>
<feature type="chain" id="PRO_0000203470" description="Transcription factor NRM1">
    <location>
        <begin position="1"/>
        <end position="249"/>
    </location>
</feature>
<feature type="region of interest" description="Disordered" evidence="1">
    <location>
        <begin position="208"/>
        <end position="230"/>
    </location>
</feature>
<feature type="modified residue" description="Phosphoserine" evidence="6">
    <location>
        <position position="145"/>
    </location>
</feature>